<evidence type="ECO:0000255" key="1">
    <source>
        <dbReference type="HAMAP-Rule" id="MF_01174"/>
    </source>
</evidence>
<reference key="1">
    <citation type="submission" date="2008-04" db="EMBL/GenBank/DDBJ databases">
        <title>Complete sequence of chromosome 1 of Burkholderia ambifaria MC40-6.</title>
        <authorList>
            <person name="Copeland A."/>
            <person name="Lucas S."/>
            <person name="Lapidus A."/>
            <person name="Glavina del Rio T."/>
            <person name="Dalin E."/>
            <person name="Tice H."/>
            <person name="Pitluck S."/>
            <person name="Chain P."/>
            <person name="Malfatti S."/>
            <person name="Shin M."/>
            <person name="Vergez L."/>
            <person name="Lang D."/>
            <person name="Schmutz J."/>
            <person name="Larimer F."/>
            <person name="Land M."/>
            <person name="Hauser L."/>
            <person name="Kyrpides N."/>
            <person name="Lykidis A."/>
            <person name="Ramette A."/>
            <person name="Konstantinidis K."/>
            <person name="Tiedje J."/>
            <person name="Richardson P."/>
        </authorList>
    </citation>
    <scope>NUCLEOTIDE SEQUENCE [LARGE SCALE GENOMIC DNA]</scope>
    <source>
        <strain>MC40-6</strain>
    </source>
</reference>
<dbReference type="EC" id="1.2.1.71" evidence="1"/>
<dbReference type="EMBL" id="CP001025">
    <property type="protein sequence ID" value="ACB63555.1"/>
    <property type="molecule type" value="Genomic_DNA"/>
</dbReference>
<dbReference type="RefSeq" id="WP_012363447.1">
    <property type="nucleotide sequence ID" value="NC_010551.1"/>
</dbReference>
<dbReference type="SMR" id="B1YW19"/>
<dbReference type="KEGG" id="bac:BamMC406_1064"/>
<dbReference type="HOGENOM" id="CLU_005391_1_0_4"/>
<dbReference type="OrthoDB" id="6187633at2"/>
<dbReference type="UniPathway" id="UPA00185">
    <property type="reaction ID" value="UER00282"/>
</dbReference>
<dbReference type="Proteomes" id="UP000001680">
    <property type="component" value="Chromosome 1"/>
</dbReference>
<dbReference type="GO" id="GO:0043824">
    <property type="term" value="F:succinylglutamate-semialdehyde dehydrogenase activity"/>
    <property type="evidence" value="ECO:0007669"/>
    <property type="project" value="UniProtKB-EC"/>
</dbReference>
<dbReference type="GO" id="GO:0019544">
    <property type="term" value="P:arginine catabolic process to glutamate"/>
    <property type="evidence" value="ECO:0007669"/>
    <property type="project" value="UniProtKB-UniRule"/>
</dbReference>
<dbReference type="GO" id="GO:0019545">
    <property type="term" value="P:arginine catabolic process to succinate"/>
    <property type="evidence" value="ECO:0007669"/>
    <property type="project" value="UniProtKB-UniRule"/>
</dbReference>
<dbReference type="CDD" id="cd07095">
    <property type="entry name" value="ALDH_SGSD_AstD"/>
    <property type="match status" value="1"/>
</dbReference>
<dbReference type="FunFam" id="3.40.605.10:FF:000010">
    <property type="entry name" value="N-succinylglutamate 5-semialdehyde dehydrogenase"/>
    <property type="match status" value="1"/>
</dbReference>
<dbReference type="Gene3D" id="3.40.605.10">
    <property type="entry name" value="Aldehyde Dehydrogenase, Chain A, domain 1"/>
    <property type="match status" value="1"/>
</dbReference>
<dbReference type="Gene3D" id="3.40.309.10">
    <property type="entry name" value="Aldehyde Dehydrogenase, Chain A, domain 2"/>
    <property type="match status" value="1"/>
</dbReference>
<dbReference type="HAMAP" id="MF_01174">
    <property type="entry name" value="Aldedh_AstD"/>
    <property type="match status" value="1"/>
</dbReference>
<dbReference type="InterPro" id="IPR016161">
    <property type="entry name" value="Ald_DH/histidinol_DH"/>
</dbReference>
<dbReference type="InterPro" id="IPR016163">
    <property type="entry name" value="Ald_DH_C"/>
</dbReference>
<dbReference type="InterPro" id="IPR016160">
    <property type="entry name" value="Ald_DH_CS_CYS"/>
</dbReference>
<dbReference type="InterPro" id="IPR029510">
    <property type="entry name" value="Ald_DH_CS_GLU"/>
</dbReference>
<dbReference type="InterPro" id="IPR016162">
    <property type="entry name" value="Ald_DH_N"/>
</dbReference>
<dbReference type="InterPro" id="IPR015590">
    <property type="entry name" value="Aldehyde_DH_dom"/>
</dbReference>
<dbReference type="InterPro" id="IPR017649">
    <property type="entry name" value="SuccinylGlu_semiald_DH_AstD"/>
</dbReference>
<dbReference type="NCBIfam" id="TIGR03240">
    <property type="entry name" value="arg_catab_astD"/>
    <property type="match status" value="1"/>
</dbReference>
<dbReference type="NCBIfam" id="NF006992">
    <property type="entry name" value="PRK09457.1"/>
    <property type="match status" value="1"/>
</dbReference>
<dbReference type="PANTHER" id="PTHR11699">
    <property type="entry name" value="ALDEHYDE DEHYDROGENASE-RELATED"/>
    <property type="match status" value="1"/>
</dbReference>
<dbReference type="Pfam" id="PF00171">
    <property type="entry name" value="Aldedh"/>
    <property type="match status" value="1"/>
</dbReference>
<dbReference type="SUPFAM" id="SSF53720">
    <property type="entry name" value="ALDH-like"/>
    <property type="match status" value="1"/>
</dbReference>
<dbReference type="PROSITE" id="PS00070">
    <property type="entry name" value="ALDEHYDE_DEHYDR_CYS"/>
    <property type="match status" value="1"/>
</dbReference>
<dbReference type="PROSITE" id="PS00687">
    <property type="entry name" value="ALDEHYDE_DEHYDR_GLU"/>
    <property type="match status" value="1"/>
</dbReference>
<accession>B1YW19</accession>
<gene>
    <name evidence="1" type="primary">astD</name>
    <name type="ordered locus">BamMC406_1064</name>
</gene>
<proteinExistence type="inferred from homology"/>
<sequence length="487" mass="51821">MTELFIDGAWIAGSGPAFASRNPGTDAIAWQGDSASAADVDRAVASARRAFAGWSALDFEARCAIVKRFAALLTERKEAIATAIGRETGKPLWEARTEVAAMAAKVGISIQAYQERTGEKRQDMADGVAVLRHRPHGVVAVFGPYNFPGHLPNGHIVPALIAGNTVVFKPSELAPGVARATVEVWQEAGLPAGVLNLVQGEKDTGIALANHRQIDGLFFTGSSDTGTLLHKQFGGRPEIVLALEMGGNNPLVIGEVEDLDAAVHHTIQSAFLSAGQRCTCARRIFVPQGAFGERFLARFADVTSKIMADVFDADPQPFMGAVISARAAAKLVDAQSRLVEQGAKPIIEMTQRDPRLGFVNASIIDVTGVANLPDEEHFGPLAQIVRYATFDEAIERANDTAFGLSAGLLADDAHAWEHFRRTIRAGIVNWNRPTNGASSAAPFGGTGRSGNHRPSAYYAADYCAYPMASVESTQLTLPASLSPGLHF</sequence>
<feature type="chain" id="PRO_1000138037" description="N-succinylglutamate 5-semialdehyde dehydrogenase">
    <location>
        <begin position="1"/>
        <end position="487"/>
    </location>
</feature>
<feature type="active site" evidence="1">
    <location>
        <position position="244"/>
    </location>
</feature>
<feature type="active site" evidence="1">
    <location>
        <position position="278"/>
    </location>
</feature>
<feature type="binding site" evidence="1">
    <location>
        <begin position="221"/>
        <end position="226"/>
    </location>
    <ligand>
        <name>NAD(+)</name>
        <dbReference type="ChEBI" id="CHEBI:57540"/>
    </ligand>
</feature>
<keyword id="KW-0056">Arginine metabolism</keyword>
<keyword id="KW-0520">NAD</keyword>
<keyword id="KW-0560">Oxidoreductase</keyword>
<protein>
    <recommendedName>
        <fullName evidence="1">N-succinylglutamate 5-semialdehyde dehydrogenase</fullName>
        <ecNumber evidence="1">1.2.1.71</ecNumber>
    </recommendedName>
    <alternativeName>
        <fullName evidence="1">Succinylglutamic semialdehyde dehydrogenase</fullName>
        <shortName evidence="1">SGSD</shortName>
    </alternativeName>
</protein>
<comment type="function">
    <text evidence="1">Catalyzes the NAD-dependent reduction of succinylglutamate semialdehyde into succinylglutamate.</text>
</comment>
<comment type="catalytic activity">
    <reaction evidence="1">
        <text>N-succinyl-L-glutamate 5-semialdehyde + NAD(+) + H2O = N-succinyl-L-glutamate + NADH + 2 H(+)</text>
        <dbReference type="Rhea" id="RHEA:10812"/>
        <dbReference type="ChEBI" id="CHEBI:15377"/>
        <dbReference type="ChEBI" id="CHEBI:15378"/>
        <dbReference type="ChEBI" id="CHEBI:57540"/>
        <dbReference type="ChEBI" id="CHEBI:57945"/>
        <dbReference type="ChEBI" id="CHEBI:58520"/>
        <dbReference type="ChEBI" id="CHEBI:58763"/>
        <dbReference type="EC" id="1.2.1.71"/>
    </reaction>
</comment>
<comment type="pathway">
    <text evidence="1">Amino-acid degradation; L-arginine degradation via AST pathway; L-glutamate and succinate from L-arginine: step 4/5.</text>
</comment>
<comment type="similarity">
    <text evidence="1">Belongs to the aldehyde dehydrogenase family. AstD subfamily.</text>
</comment>
<name>ASTD_BURA4</name>
<organism>
    <name type="scientific">Burkholderia ambifaria (strain MC40-6)</name>
    <dbReference type="NCBI Taxonomy" id="398577"/>
    <lineage>
        <taxon>Bacteria</taxon>
        <taxon>Pseudomonadati</taxon>
        <taxon>Pseudomonadota</taxon>
        <taxon>Betaproteobacteria</taxon>
        <taxon>Burkholderiales</taxon>
        <taxon>Burkholderiaceae</taxon>
        <taxon>Burkholderia</taxon>
        <taxon>Burkholderia cepacia complex</taxon>
    </lineage>
</organism>